<organism>
    <name type="scientific">Acyrthosiphon pisum secondary endosymbiont phage 1</name>
    <name type="common">Bacteriophage APSE-1</name>
    <dbReference type="NCBI Taxonomy" id="2682836"/>
    <lineage>
        <taxon>Viruses</taxon>
        <taxon>Duplodnaviria</taxon>
        <taxon>Heunggongvirae</taxon>
        <taxon>Uroviricota</taxon>
        <taxon>Caudoviricetes</taxon>
        <taxon>Sendosyvirus</taxon>
        <taxon>Sendosyvirus APSE1</taxon>
    </lineage>
</organism>
<sequence length="77" mass="8632">MFHQAKSPTHSTLTNFLRTALILFPLFCGEYILTSGSMSNRTASSDKHPSIKPSAISNFARISPSSTRRRRAMARFE</sequence>
<keyword id="KW-1185">Reference proteome</keyword>
<gene>
    <name type="primary">6</name>
</gene>
<feature type="chain" id="PRO_0000077851" description="Putative protein p6">
    <location>
        <begin position="1"/>
        <end position="77"/>
    </location>
</feature>
<feature type="region of interest" description="Disordered" evidence="1">
    <location>
        <begin position="58"/>
        <end position="77"/>
    </location>
</feature>
<feature type="compositionally biased region" description="Basic residues" evidence="1">
    <location>
        <begin position="67"/>
        <end position="77"/>
    </location>
</feature>
<reference key="1">
    <citation type="journal article" date="1999" name="Virology">
        <title>Isolation and characterization of APSE-1, a bacteriophage infecting the secondary endosymbiont of acyrthosiphon pisum.</title>
        <authorList>
            <person name="van der Wilk F."/>
            <person name="Dullemans A.M."/>
            <person name="Verbeek M."/>
            <person name="van den Heuvel J.F.J.M."/>
        </authorList>
    </citation>
    <scope>NUCLEOTIDE SEQUENCE [LARGE SCALE GENOMIC DNA]</scope>
</reference>
<dbReference type="EMBL" id="AF157835">
    <property type="protein sequence ID" value="AAF03949.1"/>
    <property type="molecule type" value="Genomic_DNA"/>
</dbReference>
<dbReference type="RefSeq" id="NP_050967.1">
    <property type="nucleotide sequence ID" value="NC_000935.1"/>
</dbReference>
<dbReference type="SMR" id="Q9T1U2"/>
<dbReference type="KEGG" id="vg:1262300"/>
<dbReference type="Proteomes" id="UP000000853">
    <property type="component" value="Genome"/>
</dbReference>
<evidence type="ECO:0000256" key="1">
    <source>
        <dbReference type="SAM" id="MobiDB-lite"/>
    </source>
</evidence>
<protein>
    <recommendedName>
        <fullName>Putative protein p6</fullName>
    </recommendedName>
</protein>
<accession>Q9T1U2</accession>
<organismHost>
    <name type="scientific">Escherichia coli</name>
    <dbReference type="NCBI Taxonomy" id="562"/>
</organismHost>
<proteinExistence type="predicted"/>
<name>VP06_BPAPS</name>